<reference key="1">
    <citation type="submission" date="2004-06" db="EMBL/GenBank/DDBJ databases">
        <authorList>
            <person name="Birren B.W."/>
            <person name="Stange-Thomann N."/>
            <person name="Hafez N."/>
            <person name="DeCaprio D."/>
            <person name="Fisher S."/>
            <person name="Butler J."/>
            <person name="Elkins T."/>
            <person name="Kodira C.D."/>
            <person name="Major J."/>
            <person name="Wang S."/>
            <person name="Nicol R."/>
            <person name="Nusbaum C."/>
        </authorList>
    </citation>
    <scope>NUCLEOTIDE SEQUENCE [LARGE SCALE GENOMIC DNA]</scope>
    <source>
        <strain>ATCC 33453 / NBRC 100688 / NCTC 11704 / L1</strain>
    </source>
</reference>
<protein>
    <recommendedName>
        <fullName evidence="1">Enolase</fullName>
        <ecNumber evidence="1">4.2.1.11</ecNumber>
    </recommendedName>
    <alternativeName>
        <fullName evidence="1">2-phospho-D-glycerate hydro-lyase</fullName>
    </alternativeName>
    <alternativeName>
        <fullName evidence="1">2-phosphoglycerate dehydratase</fullName>
    </alternativeName>
</protein>
<comment type="function">
    <text evidence="1">Catalyzes the reversible conversion of 2-phosphoglycerate (2-PG) into phosphoenolpyruvate (PEP). It is essential for the degradation of carbohydrates via glycolysis.</text>
</comment>
<comment type="catalytic activity">
    <reaction evidence="1">
        <text>(2R)-2-phosphoglycerate = phosphoenolpyruvate + H2O</text>
        <dbReference type="Rhea" id="RHEA:10164"/>
        <dbReference type="ChEBI" id="CHEBI:15377"/>
        <dbReference type="ChEBI" id="CHEBI:58289"/>
        <dbReference type="ChEBI" id="CHEBI:58702"/>
        <dbReference type="EC" id="4.2.1.11"/>
    </reaction>
</comment>
<comment type="cofactor">
    <cofactor evidence="1">
        <name>Mg(2+)</name>
        <dbReference type="ChEBI" id="CHEBI:18420"/>
    </cofactor>
    <text evidence="1">Binds a second Mg(2+) ion via substrate during catalysis.</text>
</comment>
<comment type="pathway">
    <text evidence="1">Carbohydrate degradation; glycolysis; pyruvate from D-glyceraldehyde 3-phosphate: step 4/5.</text>
</comment>
<comment type="subcellular location">
    <subcellularLocation>
        <location evidence="1">Cytoplasm</location>
    </subcellularLocation>
    <subcellularLocation>
        <location evidence="1">Secreted</location>
    </subcellularLocation>
    <subcellularLocation>
        <location evidence="1">Cell surface</location>
    </subcellularLocation>
    <text evidence="1">Fractions of enolase are present in both the cytoplasm and on the cell surface.</text>
</comment>
<comment type="similarity">
    <text evidence="1">Belongs to the enolase family.</text>
</comment>
<dbReference type="EC" id="4.2.1.11" evidence="1"/>
<dbReference type="EMBL" id="AE017263">
    <property type="protein sequence ID" value="AAT75826.1"/>
    <property type="molecule type" value="Genomic_DNA"/>
</dbReference>
<dbReference type="RefSeq" id="WP_011183366.1">
    <property type="nucleotide sequence ID" value="NC_006055.1"/>
</dbReference>
<dbReference type="RefSeq" id="YP_053710.1">
    <property type="nucleotide sequence ID" value="NC_006055.1"/>
</dbReference>
<dbReference type="SMR" id="Q6F0Z7"/>
<dbReference type="STRING" id="265311.Mfl468"/>
<dbReference type="PaxDb" id="265311-Mfl468"/>
<dbReference type="EnsemblBacteria" id="AAT75826">
    <property type="protein sequence ID" value="AAT75826"/>
    <property type="gene ID" value="Mfl468"/>
</dbReference>
<dbReference type="GeneID" id="2897869"/>
<dbReference type="KEGG" id="mfl:Mfl468"/>
<dbReference type="PATRIC" id="fig|265311.5.peg.474"/>
<dbReference type="eggNOG" id="COG0148">
    <property type="taxonomic scope" value="Bacteria"/>
</dbReference>
<dbReference type="HOGENOM" id="CLU_031223_2_1_14"/>
<dbReference type="OrthoDB" id="9804716at2"/>
<dbReference type="UniPathway" id="UPA00109">
    <property type="reaction ID" value="UER00187"/>
</dbReference>
<dbReference type="Proteomes" id="UP000006647">
    <property type="component" value="Chromosome"/>
</dbReference>
<dbReference type="GO" id="GO:0009986">
    <property type="term" value="C:cell surface"/>
    <property type="evidence" value="ECO:0007669"/>
    <property type="project" value="UniProtKB-SubCell"/>
</dbReference>
<dbReference type="GO" id="GO:0005576">
    <property type="term" value="C:extracellular region"/>
    <property type="evidence" value="ECO:0007669"/>
    <property type="project" value="UniProtKB-SubCell"/>
</dbReference>
<dbReference type="GO" id="GO:0000015">
    <property type="term" value="C:phosphopyruvate hydratase complex"/>
    <property type="evidence" value="ECO:0007669"/>
    <property type="project" value="InterPro"/>
</dbReference>
<dbReference type="GO" id="GO:0000287">
    <property type="term" value="F:magnesium ion binding"/>
    <property type="evidence" value="ECO:0007669"/>
    <property type="project" value="UniProtKB-UniRule"/>
</dbReference>
<dbReference type="GO" id="GO:0004634">
    <property type="term" value="F:phosphopyruvate hydratase activity"/>
    <property type="evidence" value="ECO:0007669"/>
    <property type="project" value="UniProtKB-UniRule"/>
</dbReference>
<dbReference type="GO" id="GO:0006096">
    <property type="term" value="P:glycolytic process"/>
    <property type="evidence" value="ECO:0007669"/>
    <property type="project" value="UniProtKB-UniRule"/>
</dbReference>
<dbReference type="CDD" id="cd03313">
    <property type="entry name" value="enolase"/>
    <property type="match status" value="1"/>
</dbReference>
<dbReference type="FunFam" id="3.20.20.120:FF:000001">
    <property type="entry name" value="Enolase"/>
    <property type="match status" value="1"/>
</dbReference>
<dbReference type="FunFam" id="3.30.390.10:FF:000001">
    <property type="entry name" value="Enolase"/>
    <property type="match status" value="1"/>
</dbReference>
<dbReference type="Gene3D" id="3.20.20.120">
    <property type="entry name" value="Enolase-like C-terminal domain"/>
    <property type="match status" value="1"/>
</dbReference>
<dbReference type="Gene3D" id="3.30.390.10">
    <property type="entry name" value="Enolase-like, N-terminal domain"/>
    <property type="match status" value="1"/>
</dbReference>
<dbReference type="HAMAP" id="MF_00318">
    <property type="entry name" value="Enolase"/>
    <property type="match status" value="1"/>
</dbReference>
<dbReference type="InterPro" id="IPR000941">
    <property type="entry name" value="Enolase"/>
</dbReference>
<dbReference type="InterPro" id="IPR036849">
    <property type="entry name" value="Enolase-like_C_sf"/>
</dbReference>
<dbReference type="InterPro" id="IPR029017">
    <property type="entry name" value="Enolase-like_N"/>
</dbReference>
<dbReference type="InterPro" id="IPR020810">
    <property type="entry name" value="Enolase_C"/>
</dbReference>
<dbReference type="InterPro" id="IPR020809">
    <property type="entry name" value="Enolase_CS"/>
</dbReference>
<dbReference type="InterPro" id="IPR020811">
    <property type="entry name" value="Enolase_N"/>
</dbReference>
<dbReference type="NCBIfam" id="TIGR01060">
    <property type="entry name" value="eno"/>
    <property type="match status" value="1"/>
</dbReference>
<dbReference type="PANTHER" id="PTHR11902">
    <property type="entry name" value="ENOLASE"/>
    <property type="match status" value="1"/>
</dbReference>
<dbReference type="PANTHER" id="PTHR11902:SF1">
    <property type="entry name" value="ENOLASE"/>
    <property type="match status" value="1"/>
</dbReference>
<dbReference type="Pfam" id="PF00113">
    <property type="entry name" value="Enolase_C"/>
    <property type="match status" value="1"/>
</dbReference>
<dbReference type="Pfam" id="PF03952">
    <property type="entry name" value="Enolase_N"/>
    <property type="match status" value="1"/>
</dbReference>
<dbReference type="PIRSF" id="PIRSF001400">
    <property type="entry name" value="Enolase"/>
    <property type="match status" value="1"/>
</dbReference>
<dbReference type="PRINTS" id="PR00148">
    <property type="entry name" value="ENOLASE"/>
</dbReference>
<dbReference type="SFLD" id="SFLDF00002">
    <property type="entry name" value="enolase"/>
    <property type="match status" value="1"/>
</dbReference>
<dbReference type="SFLD" id="SFLDG00178">
    <property type="entry name" value="enolase"/>
    <property type="match status" value="1"/>
</dbReference>
<dbReference type="SMART" id="SM01192">
    <property type="entry name" value="Enolase_C"/>
    <property type="match status" value="1"/>
</dbReference>
<dbReference type="SMART" id="SM01193">
    <property type="entry name" value="Enolase_N"/>
    <property type="match status" value="1"/>
</dbReference>
<dbReference type="SUPFAM" id="SSF51604">
    <property type="entry name" value="Enolase C-terminal domain-like"/>
    <property type="match status" value="1"/>
</dbReference>
<dbReference type="SUPFAM" id="SSF54826">
    <property type="entry name" value="Enolase N-terminal domain-like"/>
    <property type="match status" value="1"/>
</dbReference>
<dbReference type="PROSITE" id="PS00164">
    <property type="entry name" value="ENOLASE"/>
    <property type="match status" value="1"/>
</dbReference>
<accession>Q6F0Z7</accession>
<sequence length="453" mass="49550">MSRIEKIIAREVLDSRGTPTVEVELWTEFGGYGIAKAPSGASTGENEALELRDGDKARYNGKGVLKAVANVNDKIAPALIGHDVQDQLGLDRVMIKLDGTEFKKKLGANGMLAVSLAAAHAAASELEVPLYRYIGGVQAKRLPVPMLNVINGGEHADSAIDFQEFMIMPVGAPTFKEALRWSSETFQALKSLLHDKGDITAVGDEGGFAPHFSWAYAKQDLASFKAKTPAEIALDLLVEAITKAGYKVGKDGIMIAMDCASSELYFEDKKYHFKKIEKVTGQEWAFTTEEMIAYLEKLVNNYPIISIEDGLSEKDWDGFVQLTEKIGDRVQIVGDDLFTTNPRFIKEGISKDAANSTLIKLNQIGTLSETVEAITMTQKAGWTAVVSHRSGETEDATIADLAVAFNAGQIKTGSMSRSDRIAKYNRLLQIEDQLGEDAIYDGYATFYNLKINK</sequence>
<gene>
    <name evidence="1" type="primary">eno</name>
    <name type="ordered locus">Mfl468</name>
</gene>
<name>ENO_MESFL</name>
<keyword id="KW-0963">Cytoplasm</keyword>
<keyword id="KW-0324">Glycolysis</keyword>
<keyword id="KW-0456">Lyase</keyword>
<keyword id="KW-0460">Magnesium</keyword>
<keyword id="KW-0479">Metal-binding</keyword>
<keyword id="KW-1185">Reference proteome</keyword>
<keyword id="KW-0964">Secreted</keyword>
<feature type="chain" id="PRO_0000133918" description="Enolase">
    <location>
        <begin position="1"/>
        <end position="453"/>
    </location>
</feature>
<feature type="active site" description="Proton donor" evidence="1">
    <location>
        <position position="205"/>
    </location>
</feature>
<feature type="active site" description="Proton acceptor" evidence="1">
    <location>
        <position position="360"/>
    </location>
</feature>
<feature type="binding site" evidence="1">
    <location>
        <position position="163"/>
    </location>
    <ligand>
        <name>(2R)-2-phosphoglycerate</name>
        <dbReference type="ChEBI" id="CHEBI:58289"/>
    </ligand>
</feature>
<feature type="binding site" evidence="1">
    <location>
        <position position="258"/>
    </location>
    <ligand>
        <name>Mg(2+)</name>
        <dbReference type="ChEBI" id="CHEBI:18420"/>
    </ligand>
</feature>
<feature type="binding site" evidence="1">
    <location>
        <position position="308"/>
    </location>
    <ligand>
        <name>Mg(2+)</name>
        <dbReference type="ChEBI" id="CHEBI:18420"/>
    </ligand>
</feature>
<feature type="binding site" evidence="1">
    <location>
        <position position="335"/>
    </location>
    <ligand>
        <name>Mg(2+)</name>
        <dbReference type="ChEBI" id="CHEBI:18420"/>
    </ligand>
</feature>
<feature type="binding site" evidence="1">
    <location>
        <position position="360"/>
    </location>
    <ligand>
        <name>(2R)-2-phosphoglycerate</name>
        <dbReference type="ChEBI" id="CHEBI:58289"/>
    </ligand>
</feature>
<feature type="binding site" evidence="1">
    <location>
        <position position="389"/>
    </location>
    <ligand>
        <name>(2R)-2-phosphoglycerate</name>
        <dbReference type="ChEBI" id="CHEBI:58289"/>
    </ligand>
</feature>
<feature type="binding site" evidence="1">
    <location>
        <position position="390"/>
    </location>
    <ligand>
        <name>(2R)-2-phosphoglycerate</name>
        <dbReference type="ChEBI" id="CHEBI:58289"/>
    </ligand>
</feature>
<feature type="binding site" evidence="1">
    <location>
        <position position="411"/>
    </location>
    <ligand>
        <name>(2R)-2-phosphoglycerate</name>
        <dbReference type="ChEBI" id="CHEBI:58289"/>
    </ligand>
</feature>
<proteinExistence type="inferred from homology"/>
<evidence type="ECO:0000255" key="1">
    <source>
        <dbReference type="HAMAP-Rule" id="MF_00318"/>
    </source>
</evidence>
<organism>
    <name type="scientific">Mesoplasma florum (strain ATCC 33453 / NBRC 100688 / NCTC 11704 / L1)</name>
    <name type="common">Acholeplasma florum</name>
    <dbReference type="NCBI Taxonomy" id="265311"/>
    <lineage>
        <taxon>Bacteria</taxon>
        <taxon>Bacillati</taxon>
        <taxon>Mycoplasmatota</taxon>
        <taxon>Mollicutes</taxon>
        <taxon>Entomoplasmatales</taxon>
        <taxon>Entomoplasmataceae</taxon>
        <taxon>Mesoplasma</taxon>
    </lineage>
</organism>